<evidence type="ECO:0000269" key="1">
    <source>
    </source>
</evidence>
<evidence type="ECO:0000305" key="2"/>
<dbReference type="PIR" id="A05163">
    <property type="entry name" value="A05163"/>
</dbReference>
<dbReference type="SMR" id="P04368"/>
<name>ANP8_MYOSC</name>
<keyword id="KW-0047">Antifreeze protein</keyword>
<keyword id="KW-0903">Direct protein sequencing</keyword>
<keyword id="KW-0677">Repeat</keyword>
<sequence>MNGETPAQKAARLAAAAALAAKTAADAAAKAAAKAAAIAAAAASA</sequence>
<organism>
    <name type="scientific">Myoxocephalus scorpius</name>
    <name type="common">Shorthorn sculpin</name>
    <name type="synonym">Cottus scorpius</name>
    <dbReference type="NCBI Taxonomy" id="8097"/>
    <lineage>
        <taxon>Eukaryota</taxon>
        <taxon>Metazoa</taxon>
        <taxon>Chordata</taxon>
        <taxon>Craniata</taxon>
        <taxon>Vertebrata</taxon>
        <taxon>Euteleostomi</taxon>
        <taxon>Actinopterygii</taxon>
        <taxon>Neopterygii</taxon>
        <taxon>Teleostei</taxon>
        <taxon>Neoteleostei</taxon>
        <taxon>Acanthomorphata</taxon>
        <taxon>Eupercaria</taxon>
        <taxon>Perciformes</taxon>
        <taxon>Cottioidei</taxon>
        <taxon>Cottales</taxon>
        <taxon>Cottidae</taxon>
        <taxon>Myoxocephalus</taxon>
    </lineage>
</organism>
<reference key="1">
    <citation type="journal article" date="1985" name="Eur. J. Biochem.">
        <title>Structures of shorthorn sculpin antifreeze polypeptides.</title>
        <authorList>
            <person name="Hew C.-L."/>
            <person name="Joshi S."/>
            <person name="Wang N.-C."/>
            <person name="Kao M.H."/>
            <person name="Ananthanarayanan V.S."/>
        </authorList>
    </citation>
    <scope>PROTEIN SEQUENCE</scope>
</reference>
<accession>P04368</accession>
<proteinExistence type="evidence at protein level"/>
<protein>
    <recommendedName>
        <fullName>Ice-structuring protein SS-8</fullName>
        <shortName>ISP SS-8</shortName>
    </recommendedName>
    <alternativeName>
        <fullName>Antifreeze peptide SS-8</fullName>
    </alternativeName>
</protein>
<comment type="function">
    <text>Antifreeze proteins lower the blood freezing point.</text>
</comment>
<comment type="similarity">
    <text evidence="2">Belongs to the type-I AFP family.</text>
</comment>
<feature type="chain" id="PRO_0000155145" description="Ice-structuring protein SS-8">
    <location>
        <begin position="1"/>
        <end position="45"/>
    </location>
</feature>
<feature type="repeat">
    <location>
        <begin position="9"/>
        <end position="21"/>
    </location>
</feature>
<feature type="repeat">
    <location>
        <begin position="22"/>
        <end position="33"/>
    </location>
</feature>
<feature type="repeat">
    <location>
        <begin position="34"/>
        <end position="45"/>
    </location>
</feature>
<feature type="modified residue" description="Blocked amino end (Met)" evidence="1">
    <location>
        <position position="1"/>
    </location>
</feature>